<protein>
    <recommendedName>
        <fullName evidence="1">Transcriptional repressor NrdR</fullName>
    </recommendedName>
</protein>
<keyword id="KW-0067">ATP-binding</keyword>
<keyword id="KW-0238">DNA-binding</keyword>
<keyword id="KW-0479">Metal-binding</keyword>
<keyword id="KW-0547">Nucleotide-binding</keyword>
<keyword id="KW-1185">Reference proteome</keyword>
<keyword id="KW-0678">Repressor</keyword>
<keyword id="KW-0804">Transcription</keyword>
<keyword id="KW-0805">Transcription regulation</keyword>
<keyword id="KW-0862">Zinc</keyword>
<keyword id="KW-0863">Zinc-finger</keyword>
<accession>Q83BT4</accession>
<name>NRDR_COXBU</name>
<sequence>MYCPFCNAEDTKVIDSRLVEEGTQVRRRRECLKCQERFTTFETAELNLPRIIKRDGRRSAFDEEKLRAGLLKALEKRPISTEQIETAVQRIIHKLRARGECEVSSQWLGELVMDELRALDEVAYVRFASVYRSFQDINAFRDEIRRLQKQQKKSHDK</sequence>
<comment type="function">
    <text evidence="1">Negatively regulates transcription of bacterial ribonucleotide reductase nrd genes and operons by binding to NrdR-boxes.</text>
</comment>
<comment type="cofactor">
    <cofactor evidence="1">
        <name>Zn(2+)</name>
        <dbReference type="ChEBI" id="CHEBI:29105"/>
    </cofactor>
    <text evidence="1">Binds 1 zinc ion.</text>
</comment>
<comment type="similarity">
    <text evidence="1">Belongs to the NrdR family.</text>
</comment>
<organism>
    <name type="scientific">Coxiella burnetii (strain RSA 493 / Nine Mile phase I)</name>
    <dbReference type="NCBI Taxonomy" id="227377"/>
    <lineage>
        <taxon>Bacteria</taxon>
        <taxon>Pseudomonadati</taxon>
        <taxon>Pseudomonadota</taxon>
        <taxon>Gammaproteobacteria</taxon>
        <taxon>Legionellales</taxon>
        <taxon>Coxiellaceae</taxon>
        <taxon>Coxiella</taxon>
    </lineage>
</organism>
<gene>
    <name evidence="1" type="primary">nrdR</name>
    <name type="ordered locus">CBU_1418</name>
</gene>
<reference key="1">
    <citation type="journal article" date="2003" name="Proc. Natl. Acad. Sci. U.S.A.">
        <title>Complete genome sequence of the Q-fever pathogen, Coxiella burnetii.</title>
        <authorList>
            <person name="Seshadri R."/>
            <person name="Paulsen I.T."/>
            <person name="Eisen J.A."/>
            <person name="Read T.D."/>
            <person name="Nelson K.E."/>
            <person name="Nelson W.C."/>
            <person name="Ward N.L."/>
            <person name="Tettelin H."/>
            <person name="Davidsen T.M."/>
            <person name="Beanan M.J."/>
            <person name="DeBoy R.T."/>
            <person name="Daugherty S.C."/>
            <person name="Brinkac L.M."/>
            <person name="Madupu R."/>
            <person name="Dodson R.J."/>
            <person name="Khouri H.M."/>
            <person name="Lee K.H."/>
            <person name="Carty H.A."/>
            <person name="Scanlan D."/>
            <person name="Heinzen R.A."/>
            <person name="Thompson H.A."/>
            <person name="Samuel J.E."/>
            <person name="Fraser C.M."/>
            <person name="Heidelberg J.F."/>
        </authorList>
    </citation>
    <scope>NUCLEOTIDE SEQUENCE [LARGE SCALE GENOMIC DNA]</scope>
    <source>
        <strain>RSA 493 / Nine Mile phase I</strain>
    </source>
</reference>
<feature type="chain" id="PRO_0000182291" description="Transcriptional repressor NrdR">
    <location>
        <begin position="1"/>
        <end position="157"/>
    </location>
</feature>
<feature type="domain" description="ATP-cone" evidence="1">
    <location>
        <begin position="49"/>
        <end position="139"/>
    </location>
</feature>
<feature type="zinc finger region" evidence="1">
    <location>
        <begin position="3"/>
        <end position="34"/>
    </location>
</feature>
<proteinExistence type="inferred from homology"/>
<dbReference type="EMBL" id="AE016828">
    <property type="protein sequence ID" value="AAO90916.1"/>
    <property type="molecule type" value="Genomic_DNA"/>
</dbReference>
<dbReference type="RefSeq" id="NP_820402.1">
    <property type="nucleotide sequence ID" value="NC_002971.3"/>
</dbReference>
<dbReference type="RefSeq" id="WP_005771735.1">
    <property type="nucleotide sequence ID" value="NZ_CDBG01000001.1"/>
</dbReference>
<dbReference type="SMR" id="Q83BT4"/>
<dbReference type="STRING" id="227377.CBU_1418"/>
<dbReference type="EnsemblBacteria" id="AAO90916">
    <property type="protein sequence ID" value="AAO90916"/>
    <property type="gene ID" value="CBU_1418"/>
</dbReference>
<dbReference type="GeneID" id="1209324"/>
<dbReference type="KEGG" id="cbu:CBU_1418"/>
<dbReference type="PATRIC" id="fig|227377.7.peg.1418"/>
<dbReference type="eggNOG" id="COG1327">
    <property type="taxonomic scope" value="Bacteria"/>
</dbReference>
<dbReference type="HOGENOM" id="CLU_108412_0_0_6"/>
<dbReference type="OrthoDB" id="9807461at2"/>
<dbReference type="Proteomes" id="UP000002671">
    <property type="component" value="Chromosome"/>
</dbReference>
<dbReference type="GO" id="GO:0005524">
    <property type="term" value="F:ATP binding"/>
    <property type="evidence" value="ECO:0007669"/>
    <property type="project" value="UniProtKB-KW"/>
</dbReference>
<dbReference type="GO" id="GO:0003690">
    <property type="term" value="F:double-stranded DNA binding"/>
    <property type="evidence" value="ECO:0000318"/>
    <property type="project" value="GO_Central"/>
</dbReference>
<dbReference type="GO" id="GO:0008270">
    <property type="term" value="F:zinc ion binding"/>
    <property type="evidence" value="ECO:0007669"/>
    <property type="project" value="UniProtKB-UniRule"/>
</dbReference>
<dbReference type="GO" id="GO:0045892">
    <property type="term" value="P:negative regulation of DNA-templated transcription"/>
    <property type="evidence" value="ECO:0000318"/>
    <property type="project" value="GO_Central"/>
</dbReference>
<dbReference type="HAMAP" id="MF_00440">
    <property type="entry name" value="NrdR"/>
    <property type="match status" value="1"/>
</dbReference>
<dbReference type="InterPro" id="IPR005144">
    <property type="entry name" value="ATP-cone_dom"/>
</dbReference>
<dbReference type="InterPro" id="IPR055173">
    <property type="entry name" value="NrdR-like_N"/>
</dbReference>
<dbReference type="InterPro" id="IPR003796">
    <property type="entry name" value="RNR_NrdR-like"/>
</dbReference>
<dbReference type="NCBIfam" id="TIGR00244">
    <property type="entry name" value="transcriptional regulator NrdR"/>
    <property type="match status" value="1"/>
</dbReference>
<dbReference type="PANTHER" id="PTHR30455">
    <property type="entry name" value="TRANSCRIPTIONAL REPRESSOR NRDR"/>
    <property type="match status" value="1"/>
</dbReference>
<dbReference type="PANTHER" id="PTHR30455:SF2">
    <property type="entry name" value="TRANSCRIPTIONAL REPRESSOR NRDR"/>
    <property type="match status" value="1"/>
</dbReference>
<dbReference type="Pfam" id="PF03477">
    <property type="entry name" value="ATP-cone"/>
    <property type="match status" value="1"/>
</dbReference>
<dbReference type="Pfam" id="PF22811">
    <property type="entry name" value="Zn_ribbon_NrdR"/>
    <property type="match status" value="1"/>
</dbReference>
<dbReference type="PROSITE" id="PS51161">
    <property type="entry name" value="ATP_CONE"/>
    <property type="match status" value="1"/>
</dbReference>
<evidence type="ECO:0000255" key="1">
    <source>
        <dbReference type="HAMAP-Rule" id="MF_00440"/>
    </source>
</evidence>